<proteinExistence type="inferred from homology"/>
<name>LEXA_MYCTA</name>
<feature type="chain" id="PRO_1000001305" description="LexA repressor">
    <location>
        <begin position="1"/>
        <end position="236"/>
    </location>
</feature>
<feature type="DNA-binding region" description="H-T-H motif" evidence="1">
    <location>
        <begin position="51"/>
        <end position="71"/>
    </location>
</feature>
<feature type="region of interest" description="Disordered" evidence="2">
    <location>
        <begin position="1"/>
        <end position="25"/>
    </location>
</feature>
<feature type="active site" description="For autocatalytic cleavage activity" evidence="1">
    <location>
        <position position="160"/>
    </location>
</feature>
<feature type="active site" description="For autocatalytic cleavage activity" evidence="1">
    <location>
        <position position="197"/>
    </location>
</feature>
<feature type="site" description="Cleavage; by autolysis" evidence="1">
    <location>
        <begin position="125"/>
        <end position="126"/>
    </location>
</feature>
<accession>A5U672</accession>
<comment type="function">
    <text evidence="1">Represses a number of genes involved in the response to DNA damage (SOS response), including recA and lexA. In the presence of single-stranded DNA, RecA interacts with LexA causing an autocatalytic cleavage which disrupts the DNA-binding part of LexA, leading to derepression of the SOS regulon and eventually DNA repair.</text>
</comment>
<comment type="catalytic activity">
    <reaction evidence="1">
        <text>Hydrolysis of Ala-|-Gly bond in repressor LexA.</text>
        <dbReference type="EC" id="3.4.21.88"/>
    </reaction>
</comment>
<comment type="subunit">
    <text evidence="1">Homodimer.</text>
</comment>
<comment type="similarity">
    <text evidence="1">Belongs to the peptidase S24 family.</text>
</comment>
<comment type="sequence caution" evidence="3">
    <conflict type="erroneous initiation">
        <sequence resource="EMBL-CDS" id="ABQ74522"/>
    </conflict>
    <text>Truncated N-terminus.</text>
</comment>
<reference key="1">
    <citation type="journal article" date="2008" name="PLoS ONE">
        <title>Genetic basis of virulence attenuation revealed by comparative genomic analysis of Mycobacterium tuberculosis strain H37Ra versus H37Rv.</title>
        <authorList>
            <person name="Zheng H."/>
            <person name="Lu L."/>
            <person name="Wang B."/>
            <person name="Pu S."/>
            <person name="Zhang X."/>
            <person name="Zhu G."/>
            <person name="Shi W."/>
            <person name="Zhang L."/>
            <person name="Wang H."/>
            <person name="Wang S."/>
            <person name="Zhao G."/>
            <person name="Zhang Y."/>
        </authorList>
    </citation>
    <scope>NUCLEOTIDE SEQUENCE [LARGE SCALE GENOMIC DNA]</scope>
    <source>
        <strain>ATCC 25177 / H37Ra</strain>
    </source>
</reference>
<sequence length="236" mass="24841">MNDSNDTSVAGGAAGADSRVLSADSALTERQRTILDVIRASVTSRGYPPSIREIGDAVGLTSTSSVAHQLRTLERKGYLRRDPNRPRAVNVRGADDAALPPVTEVAGSDALPEPTFVPVLGRIAAGGPILAEEAVEDVFPLPRELVGEGTLFLLKVIGDSMVEAAICDGDWVVVRQQNVADNGDIVAAMIDGEATVKTFKRAGGQVWLMPHNPAFDPIPGNDATVLGKVVTVIRKV</sequence>
<dbReference type="EC" id="3.4.21.88" evidence="1"/>
<dbReference type="EMBL" id="CP000611">
    <property type="protein sequence ID" value="ABQ74522.1"/>
    <property type="status" value="ALT_INIT"/>
    <property type="molecule type" value="Genomic_DNA"/>
</dbReference>
<dbReference type="RefSeq" id="WP_003899448.1">
    <property type="nucleotide sequence ID" value="NZ_CP016972.1"/>
</dbReference>
<dbReference type="SMR" id="A5U672"/>
<dbReference type="MEROPS" id="S24.001"/>
<dbReference type="GeneID" id="45426707"/>
<dbReference type="KEGG" id="mra:MRA_2748"/>
<dbReference type="eggNOG" id="COG1974">
    <property type="taxonomic scope" value="Bacteria"/>
</dbReference>
<dbReference type="HOGENOM" id="CLU_066192_45_0_11"/>
<dbReference type="Proteomes" id="UP000001988">
    <property type="component" value="Chromosome"/>
</dbReference>
<dbReference type="GO" id="GO:0003677">
    <property type="term" value="F:DNA binding"/>
    <property type="evidence" value="ECO:0007669"/>
    <property type="project" value="UniProtKB-UniRule"/>
</dbReference>
<dbReference type="GO" id="GO:0004252">
    <property type="term" value="F:serine-type endopeptidase activity"/>
    <property type="evidence" value="ECO:0007669"/>
    <property type="project" value="UniProtKB-UniRule"/>
</dbReference>
<dbReference type="GO" id="GO:0006281">
    <property type="term" value="P:DNA repair"/>
    <property type="evidence" value="ECO:0007669"/>
    <property type="project" value="UniProtKB-UniRule"/>
</dbReference>
<dbReference type="GO" id="GO:0006260">
    <property type="term" value="P:DNA replication"/>
    <property type="evidence" value="ECO:0007669"/>
    <property type="project" value="UniProtKB-UniRule"/>
</dbReference>
<dbReference type="GO" id="GO:0045892">
    <property type="term" value="P:negative regulation of DNA-templated transcription"/>
    <property type="evidence" value="ECO:0007669"/>
    <property type="project" value="UniProtKB-UniRule"/>
</dbReference>
<dbReference type="GO" id="GO:0006508">
    <property type="term" value="P:proteolysis"/>
    <property type="evidence" value="ECO:0007669"/>
    <property type="project" value="InterPro"/>
</dbReference>
<dbReference type="GO" id="GO:0009432">
    <property type="term" value="P:SOS response"/>
    <property type="evidence" value="ECO:0007669"/>
    <property type="project" value="UniProtKB-UniRule"/>
</dbReference>
<dbReference type="CDD" id="cd06529">
    <property type="entry name" value="S24_LexA-like"/>
    <property type="match status" value="1"/>
</dbReference>
<dbReference type="FunFam" id="1.10.10.10:FF:000009">
    <property type="entry name" value="LexA repressor"/>
    <property type="match status" value="1"/>
</dbReference>
<dbReference type="FunFam" id="2.10.109.10:FF:000001">
    <property type="entry name" value="LexA repressor"/>
    <property type="match status" value="1"/>
</dbReference>
<dbReference type="Gene3D" id="2.10.109.10">
    <property type="entry name" value="Umud Fragment, subunit A"/>
    <property type="match status" value="1"/>
</dbReference>
<dbReference type="Gene3D" id="1.10.10.10">
    <property type="entry name" value="Winged helix-like DNA-binding domain superfamily/Winged helix DNA-binding domain"/>
    <property type="match status" value="1"/>
</dbReference>
<dbReference type="HAMAP" id="MF_00015">
    <property type="entry name" value="LexA"/>
    <property type="match status" value="1"/>
</dbReference>
<dbReference type="InterPro" id="IPR006200">
    <property type="entry name" value="LexA"/>
</dbReference>
<dbReference type="InterPro" id="IPR039418">
    <property type="entry name" value="LexA-like"/>
</dbReference>
<dbReference type="InterPro" id="IPR036286">
    <property type="entry name" value="LexA/Signal_pep-like_sf"/>
</dbReference>
<dbReference type="InterPro" id="IPR006199">
    <property type="entry name" value="LexA_DNA-bd_dom"/>
</dbReference>
<dbReference type="InterPro" id="IPR050077">
    <property type="entry name" value="LexA_repressor"/>
</dbReference>
<dbReference type="InterPro" id="IPR006197">
    <property type="entry name" value="Peptidase_S24_LexA"/>
</dbReference>
<dbReference type="InterPro" id="IPR015927">
    <property type="entry name" value="Peptidase_S24_S26A/B/C"/>
</dbReference>
<dbReference type="InterPro" id="IPR036388">
    <property type="entry name" value="WH-like_DNA-bd_sf"/>
</dbReference>
<dbReference type="InterPro" id="IPR036390">
    <property type="entry name" value="WH_DNA-bd_sf"/>
</dbReference>
<dbReference type="NCBIfam" id="TIGR00498">
    <property type="entry name" value="lexA"/>
    <property type="match status" value="1"/>
</dbReference>
<dbReference type="PANTHER" id="PTHR33516">
    <property type="entry name" value="LEXA REPRESSOR"/>
    <property type="match status" value="1"/>
</dbReference>
<dbReference type="PANTHER" id="PTHR33516:SF2">
    <property type="entry name" value="LEXA REPRESSOR-RELATED"/>
    <property type="match status" value="1"/>
</dbReference>
<dbReference type="Pfam" id="PF01726">
    <property type="entry name" value="LexA_DNA_bind"/>
    <property type="match status" value="1"/>
</dbReference>
<dbReference type="Pfam" id="PF00717">
    <property type="entry name" value="Peptidase_S24"/>
    <property type="match status" value="1"/>
</dbReference>
<dbReference type="PRINTS" id="PR00726">
    <property type="entry name" value="LEXASERPTASE"/>
</dbReference>
<dbReference type="SUPFAM" id="SSF51306">
    <property type="entry name" value="LexA/Signal peptidase"/>
    <property type="match status" value="1"/>
</dbReference>
<dbReference type="SUPFAM" id="SSF46785">
    <property type="entry name" value="Winged helix' DNA-binding domain"/>
    <property type="match status" value="1"/>
</dbReference>
<gene>
    <name evidence="1" type="primary">lexA</name>
    <name type="ordered locus">MRA_2748</name>
</gene>
<organism>
    <name type="scientific">Mycobacterium tuberculosis (strain ATCC 25177 / H37Ra)</name>
    <dbReference type="NCBI Taxonomy" id="419947"/>
    <lineage>
        <taxon>Bacteria</taxon>
        <taxon>Bacillati</taxon>
        <taxon>Actinomycetota</taxon>
        <taxon>Actinomycetes</taxon>
        <taxon>Mycobacteriales</taxon>
        <taxon>Mycobacteriaceae</taxon>
        <taxon>Mycobacterium</taxon>
        <taxon>Mycobacterium tuberculosis complex</taxon>
    </lineage>
</organism>
<keyword id="KW-0068">Autocatalytic cleavage</keyword>
<keyword id="KW-0227">DNA damage</keyword>
<keyword id="KW-0234">DNA repair</keyword>
<keyword id="KW-0235">DNA replication</keyword>
<keyword id="KW-0238">DNA-binding</keyword>
<keyword id="KW-0378">Hydrolase</keyword>
<keyword id="KW-1185">Reference proteome</keyword>
<keyword id="KW-0678">Repressor</keyword>
<keyword id="KW-0742">SOS response</keyword>
<keyword id="KW-0804">Transcription</keyword>
<keyword id="KW-0805">Transcription regulation</keyword>
<protein>
    <recommendedName>
        <fullName evidence="1">LexA repressor</fullName>
        <ecNumber evidence="1">3.4.21.88</ecNumber>
    </recommendedName>
</protein>
<evidence type="ECO:0000255" key="1">
    <source>
        <dbReference type="HAMAP-Rule" id="MF_00015"/>
    </source>
</evidence>
<evidence type="ECO:0000256" key="2">
    <source>
        <dbReference type="SAM" id="MobiDB-lite"/>
    </source>
</evidence>
<evidence type="ECO:0000305" key="3"/>